<feature type="chain" id="PRO_0000376584" description="Probable cell division protein WhiA">
    <location>
        <begin position="1"/>
        <end position="303"/>
    </location>
</feature>
<feature type="DNA-binding region" description="H-T-H motif" evidence="1">
    <location>
        <begin position="272"/>
        <end position="303"/>
    </location>
</feature>
<accession>Q1JMN0</accession>
<name>WHIA_STRPC</name>
<gene>
    <name evidence="1" type="primary">whiA</name>
    <name type="ordered locus">MGAS9429_Spy0531</name>
</gene>
<proteinExistence type="inferred from homology"/>
<dbReference type="EMBL" id="CP000259">
    <property type="protein sequence ID" value="ABF31719.1"/>
    <property type="molecule type" value="Genomic_DNA"/>
</dbReference>
<dbReference type="RefSeq" id="WP_002990485.1">
    <property type="nucleotide sequence ID" value="NC_008021.1"/>
</dbReference>
<dbReference type="SMR" id="Q1JMN0"/>
<dbReference type="KEGG" id="spk:MGAS9429_Spy0531"/>
<dbReference type="HOGENOM" id="CLU_053282_0_0_9"/>
<dbReference type="Proteomes" id="UP000002433">
    <property type="component" value="Chromosome"/>
</dbReference>
<dbReference type="GO" id="GO:0003677">
    <property type="term" value="F:DNA binding"/>
    <property type="evidence" value="ECO:0007669"/>
    <property type="project" value="UniProtKB-UniRule"/>
</dbReference>
<dbReference type="GO" id="GO:0051301">
    <property type="term" value="P:cell division"/>
    <property type="evidence" value="ECO:0007669"/>
    <property type="project" value="UniProtKB-UniRule"/>
</dbReference>
<dbReference type="GO" id="GO:0043937">
    <property type="term" value="P:regulation of sporulation"/>
    <property type="evidence" value="ECO:0007669"/>
    <property type="project" value="InterPro"/>
</dbReference>
<dbReference type="Gene3D" id="3.10.28.10">
    <property type="entry name" value="Homing endonucleases"/>
    <property type="match status" value="1"/>
</dbReference>
<dbReference type="HAMAP" id="MF_01420">
    <property type="entry name" value="HTH_type_WhiA"/>
    <property type="match status" value="1"/>
</dbReference>
<dbReference type="InterPro" id="IPR027434">
    <property type="entry name" value="Homing_endonucl"/>
</dbReference>
<dbReference type="InterPro" id="IPR018478">
    <property type="entry name" value="Sporu_reg_WhiA_N_dom"/>
</dbReference>
<dbReference type="InterPro" id="IPR003802">
    <property type="entry name" value="Sporulation_regulator_WhiA"/>
</dbReference>
<dbReference type="InterPro" id="IPR023054">
    <property type="entry name" value="Sporulation_regulator_WhiA_C"/>
</dbReference>
<dbReference type="InterPro" id="IPR039518">
    <property type="entry name" value="WhiA_LAGLIDADG_dom"/>
</dbReference>
<dbReference type="NCBIfam" id="TIGR00647">
    <property type="entry name" value="DNA_bind_WhiA"/>
    <property type="match status" value="1"/>
</dbReference>
<dbReference type="PANTHER" id="PTHR37307">
    <property type="entry name" value="CELL DIVISION PROTEIN WHIA-RELATED"/>
    <property type="match status" value="1"/>
</dbReference>
<dbReference type="PANTHER" id="PTHR37307:SF1">
    <property type="entry name" value="CELL DIVISION PROTEIN WHIA-RELATED"/>
    <property type="match status" value="1"/>
</dbReference>
<dbReference type="Pfam" id="PF02650">
    <property type="entry name" value="HTH_WhiA"/>
    <property type="match status" value="1"/>
</dbReference>
<dbReference type="Pfam" id="PF14527">
    <property type="entry name" value="LAGLIDADG_WhiA"/>
    <property type="match status" value="1"/>
</dbReference>
<dbReference type="Pfam" id="PF10298">
    <property type="entry name" value="WhiA_N"/>
    <property type="match status" value="1"/>
</dbReference>
<dbReference type="SUPFAM" id="SSF55608">
    <property type="entry name" value="Homing endonucleases"/>
    <property type="match status" value="1"/>
</dbReference>
<sequence>MSFTTKVKEELIHLSTGDNNELAAIIKLSGSLGLAHQSLHLSITTENAKIARYIYSLIEDAYVIVPEIRYHQKTNLRKNRVYTVYVEQGVETILADLKLADSFFGLETGIEPQVLSDDNAGRSYLKGAFLAAGSIRDPESGKYQLEIYSVYLDHAQDLAQLMQKFMLDAKTIEHKSGAVTYVQKAEDIMDFLIIIGAMSCKEDFEAIKLLREARNDINRANNAETANIAKTISASMKTINNIIKIMDTIGLESLPIELQQVAQLRVKHPDYSIQQVADALEFPITKSGVNHRLRKINKIADDL</sequence>
<organism>
    <name type="scientific">Streptococcus pyogenes serotype M12 (strain MGAS9429)</name>
    <dbReference type="NCBI Taxonomy" id="370551"/>
    <lineage>
        <taxon>Bacteria</taxon>
        <taxon>Bacillati</taxon>
        <taxon>Bacillota</taxon>
        <taxon>Bacilli</taxon>
        <taxon>Lactobacillales</taxon>
        <taxon>Streptococcaceae</taxon>
        <taxon>Streptococcus</taxon>
    </lineage>
</organism>
<protein>
    <recommendedName>
        <fullName evidence="1">Probable cell division protein WhiA</fullName>
    </recommendedName>
</protein>
<evidence type="ECO:0000255" key="1">
    <source>
        <dbReference type="HAMAP-Rule" id="MF_01420"/>
    </source>
</evidence>
<reference key="1">
    <citation type="journal article" date="2006" name="Proc. Natl. Acad. Sci. U.S.A.">
        <title>Molecular genetic anatomy of inter- and intraserotype variation in the human bacterial pathogen group A Streptococcus.</title>
        <authorList>
            <person name="Beres S.B."/>
            <person name="Richter E.W."/>
            <person name="Nagiec M.J."/>
            <person name="Sumby P."/>
            <person name="Porcella S.F."/>
            <person name="DeLeo F.R."/>
            <person name="Musser J.M."/>
        </authorList>
    </citation>
    <scope>NUCLEOTIDE SEQUENCE [LARGE SCALE GENOMIC DNA]</scope>
    <source>
        <strain>MGAS9429</strain>
    </source>
</reference>
<keyword id="KW-0131">Cell cycle</keyword>
<keyword id="KW-0132">Cell division</keyword>
<keyword id="KW-0238">DNA-binding</keyword>
<comment type="function">
    <text evidence="1">Involved in cell division and chromosome segregation.</text>
</comment>
<comment type="similarity">
    <text evidence="1">Belongs to the WhiA family.</text>
</comment>